<evidence type="ECO:0000250" key="1">
    <source>
        <dbReference type="UniProtKB" id="A0A8C2LVE3"/>
    </source>
</evidence>
<evidence type="ECO:0000250" key="2">
    <source>
        <dbReference type="UniProtKB" id="Q76KB1"/>
    </source>
</evidence>
<evidence type="ECO:0000250" key="3">
    <source>
        <dbReference type="UniProtKB" id="Q8R3H7"/>
    </source>
</evidence>
<evidence type="ECO:0000255" key="4"/>
<evidence type="ECO:0000269" key="5">
    <source>
    </source>
</evidence>
<evidence type="ECO:0000303" key="6">
    <source>
    </source>
</evidence>
<evidence type="ECO:0000305" key="7"/>
<evidence type="ECO:0000305" key="8">
    <source>
    </source>
</evidence>
<evidence type="ECO:0000312" key="9">
    <source>
        <dbReference type="FlyBase" id="FBgn0024230"/>
    </source>
</evidence>
<evidence type="ECO:0000312" key="10">
    <source>
        <dbReference type="Proteomes" id="UP000000803"/>
    </source>
</evidence>
<accession>P25722</accession>
<accession>Q9VIW4</accession>
<organism evidence="10">
    <name type="scientific">Drosophila melanogaster</name>
    <name type="common">Fruit fly</name>
    <dbReference type="NCBI Taxonomy" id="7227"/>
    <lineage>
        <taxon>Eukaryota</taxon>
        <taxon>Metazoa</taxon>
        <taxon>Ecdysozoa</taxon>
        <taxon>Arthropoda</taxon>
        <taxon>Hexapoda</taxon>
        <taxon>Insecta</taxon>
        <taxon>Pterygota</taxon>
        <taxon>Neoptera</taxon>
        <taxon>Endopterygota</taxon>
        <taxon>Diptera</taxon>
        <taxon>Brachycera</taxon>
        <taxon>Muscomorpha</taxon>
        <taxon>Ephydroidea</taxon>
        <taxon>Drosophilidae</taxon>
        <taxon>Drosophila</taxon>
        <taxon>Sophophora</taxon>
    </lineage>
</organism>
<proteinExistence type="evidence at protein level"/>
<feature type="chain" id="PRO_0000207680" description="Heparin sulfate O-sulfotransferase">
    <location>
        <begin position="1"/>
        <end position="349"/>
    </location>
</feature>
<feature type="topological domain" description="Cytoplasmic" evidence="4">
    <location>
        <begin position="1"/>
        <end position="17"/>
    </location>
</feature>
<feature type="transmembrane region" description="Helical; Signal-anchor for type II membrane protein" evidence="4">
    <location>
        <begin position="18"/>
        <end position="38"/>
    </location>
</feature>
<feature type="topological domain" description="Lumenal" evidence="4">
    <location>
        <begin position="39"/>
        <end position="349"/>
    </location>
</feature>
<feature type="active site" evidence="2">
    <location>
        <position position="139"/>
    </location>
</feature>
<feature type="active site" evidence="1">
    <location>
        <position position="141"/>
    </location>
</feature>
<feature type="glycosylation site" description="N-linked (GlcNAc...) asparagine" evidence="4">
    <location>
        <position position="107"/>
    </location>
</feature>
<feature type="glycosylation site" description="N-linked (GlcNAc...) asparagine" evidence="4">
    <location>
        <position position="126"/>
    </location>
</feature>
<feature type="glycosylation site" description="N-linked (GlcNAc...) asparagine" evidence="4">
    <location>
        <position position="282"/>
    </location>
</feature>
<feature type="disulfide bond" evidence="2">
    <location>
        <begin position="200"/>
        <end position="208"/>
    </location>
</feature>
<feature type="disulfide bond" evidence="2">
    <location>
        <begin position="221"/>
        <end position="227"/>
    </location>
</feature>
<feature type="splice variant" id="VSP_004383" description="In isoform S4." evidence="7">
    <location>
        <begin position="1"/>
        <end position="255"/>
    </location>
</feature>
<feature type="splice variant" id="VSP_004382" description="In isoform S2." evidence="7">
    <original>MFRKLLKMWILLRPTHWLILIALC</original>
    <variation>MKRSAECSEWQAFFESDDGFRQPGIIITIDEAFEAII</variation>
    <location>
        <begin position="1"/>
        <end position="24"/>
    </location>
</feature>
<feature type="sequence conflict" description="In Ref. 1; CAA42779." evidence="7" ref="1">
    <original>C</original>
    <variation>S</variation>
    <location>
        <position position="28"/>
    </location>
</feature>
<feature type="sequence conflict" description="In Ref. 1; CAA42779." evidence="7" ref="1">
    <original>DN</original>
    <variation>EH</variation>
    <location>
        <begin position="180"/>
        <end position="181"/>
    </location>
</feature>
<protein>
    <recommendedName>
        <fullName evidence="9">Heparin sulfate O-sulfotransferase</fullName>
        <shortName evidence="6">dmHS-2OST</shortName>
        <ecNumber evidence="5">2.8.2.-</ecNumber>
    </recommendedName>
</protein>
<dbReference type="EC" id="2.8.2.-" evidence="5"/>
<dbReference type="EMBL" id="X60218">
    <property type="protein sequence ID" value="CAA42779.1"/>
    <property type="status" value="ALT_FRAME"/>
    <property type="molecule type" value="mRNA"/>
</dbReference>
<dbReference type="EMBL" id="AE014134">
    <property type="protein sequence ID" value="AAF53800.1"/>
    <property type="molecule type" value="Genomic_DNA"/>
</dbReference>
<dbReference type="EMBL" id="AY058422">
    <property type="protein sequence ID" value="AAL13651.1"/>
    <property type="molecule type" value="mRNA"/>
</dbReference>
<dbReference type="PIR" id="S18765">
    <property type="entry name" value="S18765"/>
</dbReference>
<dbReference type="RefSeq" id="NP_477339.1">
    <molecule id="P25722-1"/>
    <property type="nucleotide sequence ID" value="NM_057991.5"/>
</dbReference>
<dbReference type="SMR" id="P25722"/>
<dbReference type="BioGRID" id="69059">
    <property type="interactions" value="4"/>
</dbReference>
<dbReference type="FunCoup" id="P25722">
    <property type="interactions" value="1545"/>
</dbReference>
<dbReference type="IntAct" id="P25722">
    <property type="interactions" value="2"/>
</dbReference>
<dbReference type="STRING" id="7227.FBpp0080826"/>
<dbReference type="GlyCosmos" id="P25722">
    <property type="glycosylation" value="3 sites, No reported glycans"/>
</dbReference>
<dbReference type="GlyGen" id="P25722">
    <property type="glycosylation" value="3 sites"/>
</dbReference>
<dbReference type="PaxDb" id="7227-FBpp0080826"/>
<dbReference type="DNASU" id="44433"/>
<dbReference type="EnsemblMetazoa" id="FBtr0081288">
    <molecule id="P25722-1"/>
    <property type="protein sequence ID" value="FBpp0080826"/>
    <property type="gene ID" value="FBgn0024230"/>
</dbReference>
<dbReference type="GeneID" id="44433"/>
<dbReference type="KEGG" id="dme:Dmel_CG10234"/>
<dbReference type="AGR" id="FB:FBgn0024230"/>
<dbReference type="CTD" id="44433"/>
<dbReference type="FlyBase" id="FBgn0024230">
    <property type="gene designation" value="Hs2st"/>
</dbReference>
<dbReference type="VEuPathDB" id="VectorBase:FBgn0024230"/>
<dbReference type="eggNOG" id="KOG3922">
    <property type="taxonomic scope" value="Eukaryota"/>
</dbReference>
<dbReference type="GeneTree" id="ENSGT00530000063408"/>
<dbReference type="HOGENOM" id="CLU_045310_1_1_1"/>
<dbReference type="InParanoid" id="P25722"/>
<dbReference type="OMA" id="PNQIQFV"/>
<dbReference type="OrthoDB" id="10019582at2759"/>
<dbReference type="PhylomeDB" id="P25722"/>
<dbReference type="Reactome" id="R-DME-2022928">
    <property type="pathway name" value="HS-GAG biosynthesis"/>
</dbReference>
<dbReference type="SignaLink" id="P25722"/>
<dbReference type="BioGRID-ORCS" id="44433">
    <property type="hits" value="0 hits in 1 CRISPR screen"/>
</dbReference>
<dbReference type="GenomeRNAi" id="44433"/>
<dbReference type="PRO" id="PR:P25722"/>
<dbReference type="Proteomes" id="UP000000803">
    <property type="component" value="Chromosome 2L"/>
</dbReference>
<dbReference type="Bgee" id="FBgn0024230">
    <property type="expression patterns" value="Expressed in male accessory gland secondary cell (Drosophila) in male reproductive gland and 98 other cell types or tissues"/>
</dbReference>
<dbReference type="GO" id="GO:0005794">
    <property type="term" value="C:Golgi apparatus"/>
    <property type="evidence" value="ECO:0000250"/>
    <property type="project" value="FlyBase"/>
</dbReference>
<dbReference type="GO" id="GO:0000139">
    <property type="term" value="C:Golgi membrane"/>
    <property type="evidence" value="ECO:0007669"/>
    <property type="project" value="UniProtKB-SubCell"/>
</dbReference>
<dbReference type="GO" id="GO:0004394">
    <property type="term" value="F:heparan sulfate 2-sulfotransferase activity"/>
    <property type="evidence" value="ECO:0000314"/>
    <property type="project" value="FlyBase"/>
</dbReference>
<dbReference type="GO" id="GO:0015012">
    <property type="term" value="P:heparan sulfate proteoglycan biosynthetic process"/>
    <property type="evidence" value="ECO:0000315"/>
    <property type="project" value="FlyBase"/>
</dbReference>
<dbReference type="GO" id="GO:0007424">
    <property type="term" value="P:open tracheal system development"/>
    <property type="evidence" value="ECO:0000315"/>
    <property type="project" value="FlyBase"/>
</dbReference>
<dbReference type="GO" id="GO:0007165">
    <property type="term" value="P:signal transduction"/>
    <property type="evidence" value="ECO:0000303"/>
    <property type="project" value="FlyBase"/>
</dbReference>
<dbReference type="FunFam" id="3.40.50.300:FF:001418">
    <property type="entry name" value="Heparan sulfate 2-o-sulfotransferase"/>
    <property type="match status" value="1"/>
</dbReference>
<dbReference type="Gene3D" id="3.40.50.300">
    <property type="entry name" value="P-loop containing nucleotide triphosphate hydrolases"/>
    <property type="match status" value="1"/>
</dbReference>
<dbReference type="InterPro" id="IPR007734">
    <property type="entry name" value="Heparan_SO4_2-O-STrfase"/>
</dbReference>
<dbReference type="InterPro" id="IPR027417">
    <property type="entry name" value="P-loop_NTPase"/>
</dbReference>
<dbReference type="InterPro" id="IPR005331">
    <property type="entry name" value="Sulfotransferase"/>
</dbReference>
<dbReference type="PANTHER" id="PTHR12129">
    <property type="entry name" value="HEPARAN SULFATE 2-O-SULFOTRANSFERASE"/>
    <property type="match status" value="1"/>
</dbReference>
<dbReference type="PANTHER" id="PTHR12129:SF17">
    <property type="entry name" value="HEPARAN SULFATE 2-O-SULFOTRANSFERASE 1"/>
    <property type="match status" value="1"/>
</dbReference>
<dbReference type="Pfam" id="PF03567">
    <property type="entry name" value="Sulfotransfer_2"/>
    <property type="match status" value="1"/>
</dbReference>
<dbReference type="SUPFAM" id="SSF52540">
    <property type="entry name" value="P-loop containing nucleoside triphosphate hydrolases"/>
    <property type="match status" value="1"/>
</dbReference>
<keyword id="KW-0025">Alternative splicing</keyword>
<keyword id="KW-1015">Disulfide bond</keyword>
<keyword id="KW-0325">Glycoprotein</keyword>
<keyword id="KW-0333">Golgi apparatus</keyword>
<keyword id="KW-0472">Membrane</keyword>
<keyword id="KW-1185">Reference proteome</keyword>
<keyword id="KW-0735">Signal-anchor</keyword>
<keyword id="KW-0808">Transferase</keyword>
<keyword id="KW-0812">Transmembrane</keyword>
<keyword id="KW-1133">Transmembrane helix</keyword>
<comment type="function">
    <text evidence="5">Catalyzes the transfer of sulfate to the C2-position of selected hexuronic acid residues within the maturing heparan sulfate (HS).</text>
</comment>
<comment type="subunit">
    <text evidence="2">Homotrimer.</text>
</comment>
<comment type="subcellular location">
    <subcellularLocation>
        <location evidence="3">Golgi apparatus membrane</location>
        <topology evidence="3">Single-pass type II membrane protein</topology>
    </subcellularLocation>
</comment>
<comment type="alternative products">
    <event type="alternative splicing"/>
    <isoform>
        <id>P25722-1</id>
        <name>S1</name>
        <sequence type="displayed"/>
    </isoform>
    <isoform>
        <id>P25722-2</id>
        <name>S2</name>
        <sequence type="described" ref="VSP_004382"/>
    </isoform>
    <isoform>
        <id>P25722-3</id>
        <name>S4</name>
        <sequence type="described" ref="VSP_004383"/>
    </isoform>
    <text>Additional isoforms seem to exist.</text>
</comment>
<comment type="similarity">
    <text evidence="7">Belongs to the sulfotransferase 3 family.</text>
</comment>
<comment type="caution">
    <text evidence="8">Was originally thought to be SD.</text>
</comment>
<comment type="sequence caution" evidence="7">
    <conflict type="frameshift">
        <sequence resource="EMBL-CDS" id="CAA42779"/>
    </conflict>
</comment>
<sequence length="349" mass="41273">MFRKLLKMWILLRPTHWLILIALCAVTCAGYWLLWSEIRLEHAFKPLSKLGDSLSPDQHASSTTDDFDFEEHLVVLYNRVPKTGSTSFVNIAYDLCKPNKFHVLHINVTANMHVLSLPNQIQFVRNVSRWHEMKPALYHGHMAFLDFSKFQIAHKPIYINLVRKPLDRLVSYYYFLRFGDNYRPNLVRKKAGNKITFDECVVQKQPDCDPKNMWLQIPFFCGHAAECWEPGSSWALDQAKRNLVNEYFLVGVTEQMYEFVDLLERSLPRIFHGFREHYHNSNKSHLRVTSSKLPPSESTIKSIQKTKIWQMENDLYDFALAQFEFNKKKLMQPDNKHVQKFMYEKIRPK</sequence>
<name>HS2ST_DROME</name>
<gene>
    <name evidence="9" type="primary">Hs2st</name>
    <name evidence="6" type="synonym">HS-2OST</name>
    <name evidence="9" type="ORF">CG10234</name>
</gene>
<reference key="1">
    <citation type="journal article" date="1991" name="Genetics">
        <title>On the components of segregation distortion in Drosophila melanogaster. V. Molecular analysis of the Sd locus.</title>
        <authorList>
            <person name="Powers P.A."/>
            <person name="Ganetzky B."/>
        </authorList>
    </citation>
    <scope>NUCLEOTIDE SEQUENCE [MRNA]</scope>
    <scope>ALTERNATIVE SPLICING</scope>
    <source>
        <strain>Oregon-R</strain>
    </source>
</reference>
<reference key="2">
    <citation type="journal article" date="2000" name="Science">
        <title>The genome sequence of Drosophila melanogaster.</title>
        <authorList>
            <person name="Adams M.D."/>
            <person name="Celniker S.E."/>
            <person name="Holt R.A."/>
            <person name="Evans C.A."/>
            <person name="Gocayne J.D."/>
            <person name="Amanatides P.G."/>
            <person name="Scherer S.E."/>
            <person name="Li P.W."/>
            <person name="Hoskins R.A."/>
            <person name="Galle R.F."/>
            <person name="George R.A."/>
            <person name="Lewis S.E."/>
            <person name="Richards S."/>
            <person name="Ashburner M."/>
            <person name="Henderson S.N."/>
            <person name="Sutton G.G."/>
            <person name="Wortman J.R."/>
            <person name="Yandell M.D."/>
            <person name="Zhang Q."/>
            <person name="Chen L.X."/>
            <person name="Brandon R.C."/>
            <person name="Rogers Y.-H.C."/>
            <person name="Blazej R.G."/>
            <person name="Champe M."/>
            <person name="Pfeiffer B.D."/>
            <person name="Wan K.H."/>
            <person name="Doyle C."/>
            <person name="Baxter E.G."/>
            <person name="Helt G."/>
            <person name="Nelson C.R."/>
            <person name="Miklos G.L.G."/>
            <person name="Abril J.F."/>
            <person name="Agbayani A."/>
            <person name="An H.-J."/>
            <person name="Andrews-Pfannkoch C."/>
            <person name="Baldwin D."/>
            <person name="Ballew R.M."/>
            <person name="Basu A."/>
            <person name="Baxendale J."/>
            <person name="Bayraktaroglu L."/>
            <person name="Beasley E.M."/>
            <person name="Beeson K.Y."/>
            <person name="Benos P.V."/>
            <person name="Berman B.P."/>
            <person name="Bhandari D."/>
            <person name="Bolshakov S."/>
            <person name="Borkova D."/>
            <person name="Botchan M.R."/>
            <person name="Bouck J."/>
            <person name="Brokstein P."/>
            <person name="Brottier P."/>
            <person name="Burtis K.C."/>
            <person name="Busam D.A."/>
            <person name="Butler H."/>
            <person name="Cadieu E."/>
            <person name="Center A."/>
            <person name="Chandra I."/>
            <person name="Cherry J.M."/>
            <person name="Cawley S."/>
            <person name="Dahlke C."/>
            <person name="Davenport L.B."/>
            <person name="Davies P."/>
            <person name="de Pablos B."/>
            <person name="Delcher A."/>
            <person name="Deng Z."/>
            <person name="Mays A.D."/>
            <person name="Dew I."/>
            <person name="Dietz S.M."/>
            <person name="Dodson K."/>
            <person name="Doup L.E."/>
            <person name="Downes M."/>
            <person name="Dugan-Rocha S."/>
            <person name="Dunkov B.C."/>
            <person name="Dunn P."/>
            <person name="Durbin K.J."/>
            <person name="Evangelista C.C."/>
            <person name="Ferraz C."/>
            <person name="Ferriera S."/>
            <person name="Fleischmann W."/>
            <person name="Fosler C."/>
            <person name="Gabrielian A.E."/>
            <person name="Garg N.S."/>
            <person name="Gelbart W.M."/>
            <person name="Glasser K."/>
            <person name="Glodek A."/>
            <person name="Gong F."/>
            <person name="Gorrell J.H."/>
            <person name="Gu Z."/>
            <person name="Guan P."/>
            <person name="Harris M."/>
            <person name="Harris N.L."/>
            <person name="Harvey D.A."/>
            <person name="Heiman T.J."/>
            <person name="Hernandez J.R."/>
            <person name="Houck J."/>
            <person name="Hostin D."/>
            <person name="Houston K.A."/>
            <person name="Howland T.J."/>
            <person name="Wei M.-H."/>
            <person name="Ibegwam C."/>
            <person name="Jalali M."/>
            <person name="Kalush F."/>
            <person name="Karpen G.H."/>
            <person name="Ke Z."/>
            <person name="Kennison J.A."/>
            <person name="Ketchum K.A."/>
            <person name="Kimmel B.E."/>
            <person name="Kodira C.D."/>
            <person name="Kraft C.L."/>
            <person name="Kravitz S."/>
            <person name="Kulp D."/>
            <person name="Lai Z."/>
            <person name="Lasko P."/>
            <person name="Lei Y."/>
            <person name="Levitsky A.A."/>
            <person name="Li J.H."/>
            <person name="Li Z."/>
            <person name="Liang Y."/>
            <person name="Lin X."/>
            <person name="Liu X."/>
            <person name="Mattei B."/>
            <person name="McIntosh T.C."/>
            <person name="McLeod M.P."/>
            <person name="McPherson D."/>
            <person name="Merkulov G."/>
            <person name="Milshina N.V."/>
            <person name="Mobarry C."/>
            <person name="Morris J."/>
            <person name="Moshrefi A."/>
            <person name="Mount S.M."/>
            <person name="Moy M."/>
            <person name="Murphy B."/>
            <person name="Murphy L."/>
            <person name="Muzny D.M."/>
            <person name="Nelson D.L."/>
            <person name="Nelson D.R."/>
            <person name="Nelson K.A."/>
            <person name="Nixon K."/>
            <person name="Nusskern D.R."/>
            <person name="Pacleb J.M."/>
            <person name="Palazzolo M."/>
            <person name="Pittman G.S."/>
            <person name="Pan S."/>
            <person name="Pollard J."/>
            <person name="Puri V."/>
            <person name="Reese M.G."/>
            <person name="Reinert K."/>
            <person name="Remington K."/>
            <person name="Saunders R.D.C."/>
            <person name="Scheeler F."/>
            <person name="Shen H."/>
            <person name="Shue B.C."/>
            <person name="Siden-Kiamos I."/>
            <person name="Simpson M."/>
            <person name="Skupski M.P."/>
            <person name="Smith T.J."/>
            <person name="Spier E."/>
            <person name="Spradling A.C."/>
            <person name="Stapleton M."/>
            <person name="Strong R."/>
            <person name="Sun E."/>
            <person name="Svirskas R."/>
            <person name="Tector C."/>
            <person name="Turner R."/>
            <person name="Venter E."/>
            <person name="Wang A.H."/>
            <person name="Wang X."/>
            <person name="Wang Z.-Y."/>
            <person name="Wassarman D.A."/>
            <person name="Weinstock G.M."/>
            <person name="Weissenbach J."/>
            <person name="Williams S.M."/>
            <person name="Woodage T."/>
            <person name="Worley K.C."/>
            <person name="Wu D."/>
            <person name="Yang S."/>
            <person name="Yao Q.A."/>
            <person name="Ye J."/>
            <person name="Yeh R.-F."/>
            <person name="Zaveri J.S."/>
            <person name="Zhan M."/>
            <person name="Zhang G."/>
            <person name="Zhao Q."/>
            <person name="Zheng L."/>
            <person name="Zheng X.H."/>
            <person name="Zhong F.N."/>
            <person name="Zhong W."/>
            <person name="Zhou X."/>
            <person name="Zhu S.C."/>
            <person name="Zhu X."/>
            <person name="Smith H.O."/>
            <person name="Gibbs R.A."/>
            <person name="Myers E.W."/>
            <person name="Rubin G.M."/>
            <person name="Venter J.C."/>
        </authorList>
    </citation>
    <scope>NUCLEOTIDE SEQUENCE [LARGE SCALE GENOMIC DNA]</scope>
    <source>
        <strain>Berkeley</strain>
    </source>
</reference>
<reference key="3">
    <citation type="journal article" date="2002" name="Genome Biol.">
        <title>Annotation of the Drosophila melanogaster euchromatic genome: a systematic review.</title>
        <authorList>
            <person name="Misra S."/>
            <person name="Crosby M.A."/>
            <person name="Mungall C.J."/>
            <person name="Matthews B.B."/>
            <person name="Campbell K.S."/>
            <person name="Hradecky P."/>
            <person name="Huang Y."/>
            <person name="Kaminker J.S."/>
            <person name="Millburn G.H."/>
            <person name="Prochnik S.E."/>
            <person name="Smith C.D."/>
            <person name="Tupy J.L."/>
            <person name="Whitfield E.J."/>
            <person name="Bayraktaroglu L."/>
            <person name="Berman B.P."/>
            <person name="Bettencourt B.R."/>
            <person name="Celniker S.E."/>
            <person name="de Grey A.D.N.J."/>
            <person name="Drysdale R.A."/>
            <person name="Harris N.L."/>
            <person name="Richter J."/>
            <person name="Russo S."/>
            <person name="Schroeder A.J."/>
            <person name="Shu S.Q."/>
            <person name="Stapleton M."/>
            <person name="Yamada C."/>
            <person name="Ashburner M."/>
            <person name="Gelbart W.M."/>
            <person name="Rubin G.M."/>
            <person name="Lewis S.E."/>
        </authorList>
    </citation>
    <scope>GENOME REANNOTATION</scope>
    <source>
        <strain>Berkeley</strain>
    </source>
</reference>
<reference key="4">
    <citation type="journal article" date="2002" name="Genome Biol.">
        <title>A Drosophila full-length cDNA resource.</title>
        <authorList>
            <person name="Stapleton M."/>
            <person name="Carlson J.W."/>
            <person name="Brokstein P."/>
            <person name="Yu C."/>
            <person name="Champe M."/>
            <person name="George R.A."/>
            <person name="Guarin H."/>
            <person name="Kronmiller B."/>
            <person name="Pacleb J.M."/>
            <person name="Park S."/>
            <person name="Wan K.H."/>
            <person name="Rubin G.M."/>
            <person name="Celniker S.E."/>
        </authorList>
    </citation>
    <scope>NUCLEOTIDE SEQUENCE [LARGE SCALE MRNA] (ISOFORM S1)</scope>
    <source>
        <strain>Berkeley</strain>
        <tissue>Head</tissue>
    </source>
</reference>
<reference key="5">
    <citation type="journal article" date="2007" name="J. Biol. Chem.">
        <title>Mutational study of heparan sulfate 2-O-sulfotransferase and chondroitin sulfate 2-O-sulfotransferase.</title>
        <authorList>
            <person name="Xu D."/>
            <person name="Song D."/>
            <person name="Pedersen L.C."/>
            <person name="Liu J."/>
        </authorList>
    </citation>
    <scope>FUNCTION</scope>
    <scope>CATALYTIC ACTIVITY</scope>
</reference>